<accession>A8GQC8</accession>
<protein>
    <recommendedName>
        <fullName evidence="1">Acyl-[acyl-carrier-protein]--UDP-N-acetylglucosamine O-acyltransferase</fullName>
        <shortName evidence="1">UDP-N-acetylglucosamine acyltransferase</shortName>
        <ecNumber evidence="1">2.3.1.129</ecNumber>
    </recommendedName>
</protein>
<sequence>MSNSNIHTTAVIAEGAKLGKNVKIGPYCIIGPEVVLNDNVELKSHVVIEGITEIGENTVIYPFASIGQPPQILKYANERSSTIIGSNNTIREYVTVQAGSQGGGMMTRVGNNNLFMVGVHIGHDCKIGNNVVFANYVSLAGHIGVGDYAIIGGLSAVHQYARIGEYSMIGGLSPVGADVIPFGLVSSKRAVLEGLNLIGMNRKGFDKVKSLSALKAIEEIFSGEGNFAERIKQVAEKYNNNSIVIQIIDFLNQDSSRAFCRFEK</sequence>
<feature type="chain" id="PRO_1000013179" description="Acyl-[acyl-carrier-protein]--UDP-N-acetylglucosamine O-acyltransferase">
    <location>
        <begin position="1"/>
        <end position="264"/>
    </location>
</feature>
<keyword id="KW-0012">Acyltransferase</keyword>
<keyword id="KW-0963">Cytoplasm</keyword>
<keyword id="KW-0441">Lipid A biosynthesis</keyword>
<keyword id="KW-0444">Lipid biosynthesis</keyword>
<keyword id="KW-0443">Lipid metabolism</keyword>
<keyword id="KW-0677">Repeat</keyword>
<keyword id="KW-0808">Transferase</keyword>
<organism>
    <name type="scientific">Rickettsia rickettsii (strain Sheila Smith)</name>
    <dbReference type="NCBI Taxonomy" id="392021"/>
    <lineage>
        <taxon>Bacteria</taxon>
        <taxon>Pseudomonadati</taxon>
        <taxon>Pseudomonadota</taxon>
        <taxon>Alphaproteobacteria</taxon>
        <taxon>Rickettsiales</taxon>
        <taxon>Rickettsiaceae</taxon>
        <taxon>Rickettsieae</taxon>
        <taxon>Rickettsia</taxon>
        <taxon>spotted fever group</taxon>
    </lineage>
</organism>
<reference key="1">
    <citation type="submission" date="2007-09" db="EMBL/GenBank/DDBJ databases">
        <title>Complete genome sequence of Rickettsia rickettsii.</title>
        <authorList>
            <person name="Madan A."/>
            <person name="Fahey J."/>
            <person name="Helton E."/>
            <person name="Ketteman M."/>
            <person name="Madan A."/>
            <person name="Rodrigues S."/>
            <person name="Sanchez A."/>
            <person name="Dasch G."/>
            <person name="Eremeeva M."/>
        </authorList>
    </citation>
    <scope>NUCLEOTIDE SEQUENCE [LARGE SCALE GENOMIC DNA]</scope>
    <source>
        <strain>Sheila Smith</strain>
    </source>
</reference>
<dbReference type="EC" id="2.3.1.129" evidence="1"/>
<dbReference type="EMBL" id="CP000848">
    <property type="protein sequence ID" value="ABV75603.1"/>
    <property type="molecule type" value="Genomic_DNA"/>
</dbReference>
<dbReference type="RefSeq" id="WP_012150231.1">
    <property type="nucleotide sequence ID" value="NZ_CP121767.1"/>
</dbReference>
<dbReference type="SMR" id="A8GQC8"/>
<dbReference type="GeneID" id="79936820"/>
<dbReference type="KEGG" id="rri:A1G_00035"/>
<dbReference type="HOGENOM" id="CLU_061249_0_0_5"/>
<dbReference type="UniPathway" id="UPA00359">
    <property type="reaction ID" value="UER00477"/>
</dbReference>
<dbReference type="Proteomes" id="UP000006832">
    <property type="component" value="Chromosome"/>
</dbReference>
<dbReference type="GO" id="GO:0005737">
    <property type="term" value="C:cytoplasm"/>
    <property type="evidence" value="ECO:0007669"/>
    <property type="project" value="UniProtKB-SubCell"/>
</dbReference>
<dbReference type="GO" id="GO:0016020">
    <property type="term" value="C:membrane"/>
    <property type="evidence" value="ECO:0007669"/>
    <property type="project" value="GOC"/>
</dbReference>
<dbReference type="GO" id="GO:0008780">
    <property type="term" value="F:acyl-[acyl-carrier-protein]-UDP-N-acetylglucosamine O-acyltransferase activity"/>
    <property type="evidence" value="ECO:0007669"/>
    <property type="project" value="UniProtKB-UniRule"/>
</dbReference>
<dbReference type="GO" id="GO:0009245">
    <property type="term" value="P:lipid A biosynthetic process"/>
    <property type="evidence" value="ECO:0007669"/>
    <property type="project" value="UniProtKB-UniRule"/>
</dbReference>
<dbReference type="CDD" id="cd03351">
    <property type="entry name" value="LbH_UDP-GlcNAc_AT"/>
    <property type="match status" value="1"/>
</dbReference>
<dbReference type="Gene3D" id="2.160.10.10">
    <property type="entry name" value="Hexapeptide repeat proteins"/>
    <property type="match status" value="1"/>
</dbReference>
<dbReference type="Gene3D" id="1.20.1180.10">
    <property type="entry name" value="Udp N-acetylglucosamine O-acyltransferase, C-terminal domain"/>
    <property type="match status" value="1"/>
</dbReference>
<dbReference type="HAMAP" id="MF_00387">
    <property type="entry name" value="LpxA"/>
    <property type="match status" value="1"/>
</dbReference>
<dbReference type="InterPro" id="IPR029098">
    <property type="entry name" value="Acetyltransf_C"/>
</dbReference>
<dbReference type="InterPro" id="IPR037157">
    <property type="entry name" value="Acetyltransf_C_sf"/>
</dbReference>
<dbReference type="InterPro" id="IPR001451">
    <property type="entry name" value="Hexapep"/>
</dbReference>
<dbReference type="InterPro" id="IPR018357">
    <property type="entry name" value="Hexapep_transf_CS"/>
</dbReference>
<dbReference type="InterPro" id="IPR010137">
    <property type="entry name" value="Lipid_A_LpxA"/>
</dbReference>
<dbReference type="InterPro" id="IPR011004">
    <property type="entry name" value="Trimer_LpxA-like_sf"/>
</dbReference>
<dbReference type="NCBIfam" id="TIGR01852">
    <property type="entry name" value="lipid_A_lpxA"/>
    <property type="match status" value="1"/>
</dbReference>
<dbReference type="NCBIfam" id="NF003657">
    <property type="entry name" value="PRK05289.1"/>
    <property type="match status" value="1"/>
</dbReference>
<dbReference type="PANTHER" id="PTHR43480">
    <property type="entry name" value="ACYL-[ACYL-CARRIER-PROTEIN]--UDP-N-ACETYLGLUCOSAMINE O-ACYLTRANSFERASE"/>
    <property type="match status" value="1"/>
</dbReference>
<dbReference type="PANTHER" id="PTHR43480:SF1">
    <property type="entry name" value="ACYL-[ACYL-CARRIER-PROTEIN]--UDP-N-ACETYLGLUCOSAMINE O-ACYLTRANSFERASE, MITOCHONDRIAL-RELATED"/>
    <property type="match status" value="1"/>
</dbReference>
<dbReference type="Pfam" id="PF13720">
    <property type="entry name" value="Acetyltransf_11"/>
    <property type="match status" value="1"/>
</dbReference>
<dbReference type="Pfam" id="PF00132">
    <property type="entry name" value="Hexapep"/>
    <property type="match status" value="2"/>
</dbReference>
<dbReference type="PIRSF" id="PIRSF000456">
    <property type="entry name" value="UDP-GlcNAc_acltr"/>
    <property type="match status" value="1"/>
</dbReference>
<dbReference type="SUPFAM" id="SSF51161">
    <property type="entry name" value="Trimeric LpxA-like enzymes"/>
    <property type="match status" value="1"/>
</dbReference>
<dbReference type="PROSITE" id="PS00101">
    <property type="entry name" value="HEXAPEP_TRANSFERASES"/>
    <property type="match status" value="1"/>
</dbReference>
<proteinExistence type="inferred from homology"/>
<gene>
    <name evidence="1" type="primary">lpxA</name>
    <name type="ordered locus">A1G_00035</name>
</gene>
<comment type="function">
    <text evidence="1">Involved in the biosynthesis of lipid A, a phosphorylated glycolipid that anchors the lipopolysaccharide to the outer membrane of the cell.</text>
</comment>
<comment type="catalytic activity">
    <reaction evidence="1">
        <text>a (3R)-hydroxyacyl-[ACP] + UDP-N-acetyl-alpha-D-glucosamine = a UDP-3-O-[(3R)-3-hydroxyacyl]-N-acetyl-alpha-D-glucosamine + holo-[ACP]</text>
        <dbReference type="Rhea" id="RHEA:67812"/>
        <dbReference type="Rhea" id="RHEA-COMP:9685"/>
        <dbReference type="Rhea" id="RHEA-COMP:9945"/>
        <dbReference type="ChEBI" id="CHEBI:57705"/>
        <dbReference type="ChEBI" id="CHEBI:64479"/>
        <dbReference type="ChEBI" id="CHEBI:78827"/>
        <dbReference type="ChEBI" id="CHEBI:173225"/>
        <dbReference type="EC" id="2.3.1.129"/>
    </reaction>
</comment>
<comment type="pathway">
    <text evidence="1">Glycolipid biosynthesis; lipid IV(A) biosynthesis; lipid IV(A) from (3R)-3-hydroxytetradecanoyl-[acyl-carrier-protein] and UDP-N-acetyl-alpha-D-glucosamine: step 1/6.</text>
</comment>
<comment type="subunit">
    <text evidence="1">Homotrimer.</text>
</comment>
<comment type="subcellular location">
    <subcellularLocation>
        <location evidence="1">Cytoplasm</location>
    </subcellularLocation>
</comment>
<comment type="similarity">
    <text evidence="1">Belongs to the transferase hexapeptide repeat family. LpxA subfamily.</text>
</comment>
<evidence type="ECO:0000255" key="1">
    <source>
        <dbReference type="HAMAP-Rule" id="MF_00387"/>
    </source>
</evidence>
<name>LPXA_RICRS</name>